<protein>
    <recommendedName>
        <fullName evidence="1">YcgL domain-containing protein Shew_2183</fullName>
    </recommendedName>
</protein>
<accession>A3QF01</accession>
<feature type="chain" id="PRO_0000375371" description="YcgL domain-containing protein Shew_2183">
    <location>
        <begin position="1"/>
        <end position="93"/>
    </location>
</feature>
<feature type="domain" description="YcgL" evidence="1">
    <location>
        <begin position="1"/>
        <end position="85"/>
    </location>
</feature>
<gene>
    <name type="ordered locus">Shew_2183</name>
</gene>
<name>Y2183_SHELP</name>
<organism>
    <name type="scientific">Shewanella loihica (strain ATCC BAA-1088 / PV-4)</name>
    <dbReference type="NCBI Taxonomy" id="323850"/>
    <lineage>
        <taxon>Bacteria</taxon>
        <taxon>Pseudomonadati</taxon>
        <taxon>Pseudomonadota</taxon>
        <taxon>Gammaproteobacteria</taxon>
        <taxon>Alteromonadales</taxon>
        <taxon>Shewanellaceae</taxon>
        <taxon>Shewanella</taxon>
    </lineage>
</organism>
<sequence length="93" mass="10918">MICAVYKSRLKPDSYLFVEKRNDFERVPEPLMKMFGTPELVMLLPLNKREQLALADIEKVKVELAEKGYYLQLPPPPVNLLEEYKKEIGYSRD</sequence>
<keyword id="KW-1185">Reference proteome</keyword>
<proteinExistence type="inferred from homology"/>
<dbReference type="EMBL" id="CP000606">
    <property type="protein sequence ID" value="ABO24049.1"/>
    <property type="molecule type" value="Genomic_DNA"/>
</dbReference>
<dbReference type="RefSeq" id="WP_011865981.1">
    <property type="nucleotide sequence ID" value="NC_009092.1"/>
</dbReference>
<dbReference type="SMR" id="A3QF01"/>
<dbReference type="STRING" id="323850.Shew_2183"/>
<dbReference type="KEGG" id="slo:Shew_2183"/>
<dbReference type="eggNOG" id="COG3100">
    <property type="taxonomic scope" value="Bacteria"/>
</dbReference>
<dbReference type="HOGENOM" id="CLU_155118_1_0_6"/>
<dbReference type="OrthoDB" id="7062382at2"/>
<dbReference type="Proteomes" id="UP000001558">
    <property type="component" value="Chromosome"/>
</dbReference>
<dbReference type="Gene3D" id="3.10.510.20">
    <property type="entry name" value="YcgL domain"/>
    <property type="match status" value="1"/>
</dbReference>
<dbReference type="HAMAP" id="MF_01866">
    <property type="entry name" value="UPF0745"/>
    <property type="match status" value="1"/>
</dbReference>
<dbReference type="InterPro" id="IPR038068">
    <property type="entry name" value="YcgL-like_sf"/>
</dbReference>
<dbReference type="InterPro" id="IPR027354">
    <property type="entry name" value="YcgL_dom"/>
</dbReference>
<dbReference type="PANTHER" id="PTHR38109">
    <property type="entry name" value="PROTEIN YCGL"/>
    <property type="match status" value="1"/>
</dbReference>
<dbReference type="PANTHER" id="PTHR38109:SF1">
    <property type="entry name" value="PROTEIN YCGL"/>
    <property type="match status" value="1"/>
</dbReference>
<dbReference type="Pfam" id="PF05166">
    <property type="entry name" value="YcgL"/>
    <property type="match status" value="1"/>
</dbReference>
<dbReference type="SUPFAM" id="SSF160191">
    <property type="entry name" value="YcgL-like"/>
    <property type="match status" value="1"/>
</dbReference>
<dbReference type="PROSITE" id="PS51648">
    <property type="entry name" value="YCGL"/>
    <property type="match status" value="1"/>
</dbReference>
<evidence type="ECO:0000255" key="1">
    <source>
        <dbReference type="HAMAP-Rule" id="MF_01866"/>
    </source>
</evidence>
<reference key="1">
    <citation type="submission" date="2007-03" db="EMBL/GenBank/DDBJ databases">
        <title>Complete sequence of Shewanella loihica PV-4.</title>
        <authorList>
            <consortium name="US DOE Joint Genome Institute"/>
            <person name="Copeland A."/>
            <person name="Lucas S."/>
            <person name="Lapidus A."/>
            <person name="Barry K."/>
            <person name="Detter J.C."/>
            <person name="Glavina del Rio T."/>
            <person name="Hammon N."/>
            <person name="Israni S."/>
            <person name="Dalin E."/>
            <person name="Tice H."/>
            <person name="Pitluck S."/>
            <person name="Chain P."/>
            <person name="Malfatti S."/>
            <person name="Shin M."/>
            <person name="Vergez L."/>
            <person name="Schmutz J."/>
            <person name="Larimer F."/>
            <person name="Land M."/>
            <person name="Hauser L."/>
            <person name="Kyrpides N."/>
            <person name="Mikhailova N."/>
            <person name="Romine M.F."/>
            <person name="Serres G."/>
            <person name="Fredrickson J."/>
            <person name="Tiedje J."/>
            <person name="Richardson P."/>
        </authorList>
    </citation>
    <scope>NUCLEOTIDE SEQUENCE [LARGE SCALE GENOMIC DNA]</scope>
    <source>
        <strain>ATCC BAA-1088 / PV-4</strain>
    </source>
</reference>